<reference evidence="4" key="1">
    <citation type="submission" date="2005-10" db="EMBL/GenBank/DDBJ databases">
        <authorList>
            <consortium name="NIH - Xenopus Gene Collection (XGC) project"/>
        </authorList>
    </citation>
    <scope>NUCLEOTIDE SEQUENCE [LARGE SCALE MRNA]</scope>
    <source>
        <tissue evidence="4">Neurula</tissue>
    </source>
</reference>
<evidence type="ECO:0000250" key="1">
    <source>
        <dbReference type="UniProtKB" id="P25800"/>
    </source>
</evidence>
<evidence type="ECO:0000250" key="2">
    <source>
        <dbReference type="UniProtKB" id="Q924W9"/>
    </source>
</evidence>
<evidence type="ECO:0000255" key="3">
    <source>
        <dbReference type="PROSITE-ProRule" id="PRU00125"/>
    </source>
</evidence>
<evidence type="ECO:0000312" key="4">
    <source>
        <dbReference type="EMBL" id="AAI06432.1"/>
    </source>
</evidence>
<sequence length="156" mass="17814">MMVLEKEDGVPMLSVQPKGKQKGCAGCNRKIKDRYLLKALDKYWHEDCLKCACCDCRLGEVGSTLYTKANLILCRRDYLRLFGTTGNCAACSKLIPAFEMVMRARDNVYHLDCFACQLCNQRFCVGDKFFLKNNMILCQMDYEEGQLNGSFDSQVQ</sequence>
<feature type="chain" id="PRO_0000318110" description="Rhombotin-1">
    <location>
        <begin position="1"/>
        <end position="156"/>
    </location>
</feature>
<feature type="domain" description="LIM zinc-binding 1" evidence="3">
    <location>
        <begin position="22"/>
        <end position="84"/>
    </location>
</feature>
<feature type="domain" description="LIM zinc-binding 2" evidence="3">
    <location>
        <begin position="86"/>
        <end position="148"/>
    </location>
</feature>
<gene>
    <name evidence="1" type="primary">lmo1</name>
</gene>
<proteinExistence type="evidence at transcript level"/>
<dbReference type="EMBL" id="BC106431">
    <property type="protein sequence ID" value="AAI06432.1"/>
    <property type="molecule type" value="mRNA"/>
</dbReference>
<dbReference type="SMR" id="Q3B8H4"/>
<dbReference type="DNASU" id="734798"/>
<dbReference type="KEGG" id="xla:734798"/>
<dbReference type="AGR" id="Xenbase:XB-GENE-17346296"/>
<dbReference type="CTD" id="734798"/>
<dbReference type="Xenbase" id="XB-GENE-17346296">
    <property type="gene designation" value="lmo1.S"/>
</dbReference>
<dbReference type="OMA" id="IRDRYML"/>
<dbReference type="OrthoDB" id="6352355at2759"/>
<dbReference type="Proteomes" id="UP000186698">
    <property type="component" value="Chromosome 4S"/>
</dbReference>
<dbReference type="Bgee" id="734798">
    <property type="expression patterns" value="Expressed in brain and 14 other cell types or tissues"/>
</dbReference>
<dbReference type="GO" id="GO:0005634">
    <property type="term" value="C:nucleus"/>
    <property type="evidence" value="ECO:0000250"/>
    <property type="project" value="UniProtKB"/>
</dbReference>
<dbReference type="GO" id="GO:0140297">
    <property type="term" value="F:DNA-binding transcription factor binding"/>
    <property type="evidence" value="ECO:0000318"/>
    <property type="project" value="GO_Central"/>
</dbReference>
<dbReference type="GO" id="GO:0046872">
    <property type="term" value="F:metal ion binding"/>
    <property type="evidence" value="ECO:0007669"/>
    <property type="project" value="UniProtKB-KW"/>
</dbReference>
<dbReference type="GO" id="GO:0003713">
    <property type="term" value="F:transcription coactivator activity"/>
    <property type="evidence" value="ECO:0000318"/>
    <property type="project" value="GO_Central"/>
</dbReference>
<dbReference type="GO" id="GO:0045944">
    <property type="term" value="P:positive regulation of transcription by RNA polymerase II"/>
    <property type="evidence" value="ECO:0000318"/>
    <property type="project" value="GO_Central"/>
</dbReference>
<dbReference type="CDD" id="cd09388">
    <property type="entry name" value="LIM1_LMO1_LMO3"/>
    <property type="match status" value="1"/>
</dbReference>
<dbReference type="CDD" id="cd09389">
    <property type="entry name" value="LIM2_LMO1_LMO3"/>
    <property type="match status" value="1"/>
</dbReference>
<dbReference type="FunFam" id="2.10.110.10:FF:000015">
    <property type="entry name" value="LIM domain only 3"/>
    <property type="match status" value="1"/>
</dbReference>
<dbReference type="FunFam" id="2.10.110.10:FF:000016">
    <property type="entry name" value="LIM domain only 3"/>
    <property type="match status" value="1"/>
</dbReference>
<dbReference type="Gene3D" id="2.10.110.10">
    <property type="entry name" value="Cysteine Rich Protein"/>
    <property type="match status" value="2"/>
</dbReference>
<dbReference type="InterPro" id="IPR050945">
    <property type="entry name" value="LMO_RBTN_TF"/>
</dbReference>
<dbReference type="InterPro" id="IPR001781">
    <property type="entry name" value="Znf_LIM"/>
</dbReference>
<dbReference type="PANTHER" id="PTHR45787">
    <property type="entry name" value="LD11652P"/>
    <property type="match status" value="1"/>
</dbReference>
<dbReference type="PANTHER" id="PTHR45787:SF2">
    <property type="entry name" value="RHOMBOTIN-1"/>
    <property type="match status" value="1"/>
</dbReference>
<dbReference type="Pfam" id="PF00412">
    <property type="entry name" value="LIM"/>
    <property type="match status" value="2"/>
</dbReference>
<dbReference type="SMART" id="SM00132">
    <property type="entry name" value="LIM"/>
    <property type="match status" value="2"/>
</dbReference>
<dbReference type="SUPFAM" id="SSF57716">
    <property type="entry name" value="Glucocorticoid receptor-like (DNA-binding domain)"/>
    <property type="match status" value="3"/>
</dbReference>
<dbReference type="PROSITE" id="PS00478">
    <property type="entry name" value="LIM_DOMAIN_1"/>
    <property type="match status" value="2"/>
</dbReference>
<dbReference type="PROSITE" id="PS50023">
    <property type="entry name" value="LIM_DOMAIN_2"/>
    <property type="match status" value="2"/>
</dbReference>
<keyword id="KW-0440">LIM domain</keyword>
<keyword id="KW-0479">Metal-binding</keyword>
<keyword id="KW-0539">Nucleus</keyword>
<keyword id="KW-1185">Reference proteome</keyword>
<keyword id="KW-0677">Repeat</keyword>
<keyword id="KW-0862">Zinc</keyword>
<accession>Q3B8H4</accession>
<comment type="function">
    <text evidence="2">May be involved in gene regulation within neural lineage cells potentially by direct DNA binding or by binding to other transcription factors.</text>
</comment>
<comment type="subcellular location">
    <subcellularLocation>
        <location evidence="2">Nucleus</location>
    </subcellularLocation>
</comment>
<name>RBTN1_XENLA</name>
<protein>
    <recommendedName>
        <fullName>Rhombotin-1</fullName>
    </recommendedName>
    <alternativeName>
        <fullName>LIM domain only protein 1</fullName>
        <shortName>LMO-1</shortName>
    </alternativeName>
</protein>
<organism>
    <name type="scientific">Xenopus laevis</name>
    <name type="common">African clawed frog</name>
    <dbReference type="NCBI Taxonomy" id="8355"/>
    <lineage>
        <taxon>Eukaryota</taxon>
        <taxon>Metazoa</taxon>
        <taxon>Chordata</taxon>
        <taxon>Craniata</taxon>
        <taxon>Vertebrata</taxon>
        <taxon>Euteleostomi</taxon>
        <taxon>Amphibia</taxon>
        <taxon>Batrachia</taxon>
        <taxon>Anura</taxon>
        <taxon>Pipoidea</taxon>
        <taxon>Pipidae</taxon>
        <taxon>Xenopodinae</taxon>
        <taxon>Xenopus</taxon>
        <taxon>Xenopus</taxon>
    </lineage>
</organism>